<reference key="1">
    <citation type="submission" date="2008-05" db="EMBL/GenBank/DDBJ databases">
        <title>Complete sequence of Rhodopseudomonas palustris TIE-1.</title>
        <authorList>
            <consortium name="US DOE Joint Genome Institute"/>
            <person name="Lucas S."/>
            <person name="Copeland A."/>
            <person name="Lapidus A."/>
            <person name="Glavina del Rio T."/>
            <person name="Dalin E."/>
            <person name="Tice H."/>
            <person name="Pitluck S."/>
            <person name="Chain P."/>
            <person name="Malfatti S."/>
            <person name="Shin M."/>
            <person name="Vergez L."/>
            <person name="Lang D."/>
            <person name="Schmutz J."/>
            <person name="Larimer F."/>
            <person name="Land M."/>
            <person name="Hauser L."/>
            <person name="Kyrpides N."/>
            <person name="Mikhailova N."/>
            <person name="Emerson D."/>
            <person name="Newman D.K."/>
            <person name="Roden E."/>
            <person name="Richardson P."/>
        </authorList>
    </citation>
    <scope>NUCLEOTIDE SEQUENCE [LARGE SCALE GENOMIC DNA]</scope>
    <source>
        <strain>TIE-1</strain>
    </source>
</reference>
<keyword id="KW-0030">Aminoacyl-tRNA synthetase</keyword>
<keyword id="KW-0067">ATP-binding</keyword>
<keyword id="KW-0963">Cytoplasm</keyword>
<keyword id="KW-0436">Ligase</keyword>
<keyword id="KW-0460">Magnesium</keyword>
<keyword id="KW-0479">Metal-binding</keyword>
<keyword id="KW-0547">Nucleotide-binding</keyword>
<keyword id="KW-0648">Protein biosynthesis</keyword>
<name>SYFA_RHOPT</name>
<sequence>MSNLENLQSQILADIAAAADEAALEAVRVGALGKKGSISALLATLGKMDPEQRKTEGAAINRAKEAVTDALTARRDVLKAAALDAKLAAETIDVTLPMREPAAEQGRLHPLSQVWDELTAIFADMGFSIAEGPDIETDDYNFTKLNFPEGHPAREMHDTFYFNPKEDGSRLLLRTHTSPVQVRTMLSQRPPIRVICPGRTYRSDSDQTHTPMFHQVEGLVIDKGSHLGHLKWILHEFCKAFFEVDNVNMRFRPSFFPFTEPSLEVDIQCRRGKDEIRFGEGEDWLEILGCGMVHPNVLTACGLDPDEYQGFAWGMGIDRIAMLKYGMSDLRQLFEADVRWLNHYGFKPLDIPTLAGGLSS</sequence>
<proteinExistence type="inferred from homology"/>
<organism>
    <name type="scientific">Rhodopseudomonas palustris (strain TIE-1)</name>
    <dbReference type="NCBI Taxonomy" id="395960"/>
    <lineage>
        <taxon>Bacteria</taxon>
        <taxon>Pseudomonadati</taxon>
        <taxon>Pseudomonadota</taxon>
        <taxon>Alphaproteobacteria</taxon>
        <taxon>Hyphomicrobiales</taxon>
        <taxon>Nitrobacteraceae</taxon>
        <taxon>Rhodopseudomonas</taxon>
    </lineage>
</organism>
<protein>
    <recommendedName>
        <fullName evidence="1">Phenylalanine--tRNA ligase alpha subunit</fullName>
        <ecNumber evidence="1">6.1.1.20</ecNumber>
    </recommendedName>
    <alternativeName>
        <fullName evidence="1">Phenylalanyl-tRNA synthetase alpha subunit</fullName>
        <shortName evidence="1">PheRS</shortName>
    </alternativeName>
</protein>
<evidence type="ECO:0000255" key="1">
    <source>
        <dbReference type="HAMAP-Rule" id="MF_00281"/>
    </source>
</evidence>
<comment type="catalytic activity">
    <reaction evidence="1">
        <text>tRNA(Phe) + L-phenylalanine + ATP = L-phenylalanyl-tRNA(Phe) + AMP + diphosphate + H(+)</text>
        <dbReference type="Rhea" id="RHEA:19413"/>
        <dbReference type="Rhea" id="RHEA-COMP:9668"/>
        <dbReference type="Rhea" id="RHEA-COMP:9699"/>
        <dbReference type="ChEBI" id="CHEBI:15378"/>
        <dbReference type="ChEBI" id="CHEBI:30616"/>
        <dbReference type="ChEBI" id="CHEBI:33019"/>
        <dbReference type="ChEBI" id="CHEBI:58095"/>
        <dbReference type="ChEBI" id="CHEBI:78442"/>
        <dbReference type="ChEBI" id="CHEBI:78531"/>
        <dbReference type="ChEBI" id="CHEBI:456215"/>
        <dbReference type="EC" id="6.1.1.20"/>
    </reaction>
</comment>
<comment type="cofactor">
    <cofactor evidence="1">
        <name>Mg(2+)</name>
        <dbReference type="ChEBI" id="CHEBI:18420"/>
    </cofactor>
    <text evidence="1">Binds 2 magnesium ions per tetramer.</text>
</comment>
<comment type="subunit">
    <text evidence="1">Tetramer of two alpha and two beta subunits.</text>
</comment>
<comment type="subcellular location">
    <subcellularLocation>
        <location evidence="1">Cytoplasm</location>
    </subcellularLocation>
</comment>
<comment type="similarity">
    <text evidence="1">Belongs to the class-II aminoacyl-tRNA synthetase family. Phe-tRNA synthetase alpha subunit type 1 subfamily.</text>
</comment>
<feature type="chain" id="PRO_1000114907" description="Phenylalanine--tRNA ligase alpha subunit">
    <location>
        <begin position="1"/>
        <end position="360"/>
    </location>
</feature>
<feature type="binding site" evidence="1">
    <location>
        <position position="260"/>
    </location>
    <ligand>
        <name>Mg(2+)</name>
        <dbReference type="ChEBI" id="CHEBI:18420"/>
        <note>shared with beta subunit</note>
    </ligand>
</feature>
<accession>B3Q5X1</accession>
<gene>
    <name evidence="1" type="primary">pheS</name>
    <name type="ordered locus">Rpal_0038</name>
</gene>
<dbReference type="EC" id="6.1.1.20" evidence="1"/>
<dbReference type="EMBL" id="CP001096">
    <property type="protein sequence ID" value="ACE98600.1"/>
    <property type="molecule type" value="Genomic_DNA"/>
</dbReference>
<dbReference type="RefSeq" id="WP_011155608.1">
    <property type="nucleotide sequence ID" value="NC_011004.1"/>
</dbReference>
<dbReference type="SMR" id="B3Q5X1"/>
<dbReference type="GeneID" id="66891036"/>
<dbReference type="KEGG" id="rpt:Rpal_0038"/>
<dbReference type="HOGENOM" id="CLU_025086_0_1_5"/>
<dbReference type="OrthoDB" id="9800719at2"/>
<dbReference type="Proteomes" id="UP000001725">
    <property type="component" value="Chromosome"/>
</dbReference>
<dbReference type="GO" id="GO:0005737">
    <property type="term" value="C:cytoplasm"/>
    <property type="evidence" value="ECO:0007669"/>
    <property type="project" value="UniProtKB-SubCell"/>
</dbReference>
<dbReference type="GO" id="GO:0005524">
    <property type="term" value="F:ATP binding"/>
    <property type="evidence" value="ECO:0007669"/>
    <property type="project" value="UniProtKB-UniRule"/>
</dbReference>
<dbReference type="GO" id="GO:0000287">
    <property type="term" value="F:magnesium ion binding"/>
    <property type="evidence" value="ECO:0007669"/>
    <property type="project" value="UniProtKB-UniRule"/>
</dbReference>
<dbReference type="GO" id="GO:0004826">
    <property type="term" value="F:phenylalanine-tRNA ligase activity"/>
    <property type="evidence" value="ECO:0007669"/>
    <property type="project" value="UniProtKB-UniRule"/>
</dbReference>
<dbReference type="GO" id="GO:0000049">
    <property type="term" value="F:tRNA binding"/>
    <property type="evidence" value="ECO:0007669"/>
    <property type="project" value="InterPro"/>
</dbReference>
<dbReference type="GO" id="GO:0006432">
    <property type="term" value="P:phenylalanyl-tRNA aminoacylation"/>
    <property type="evidence" value="ECO:0007669"/>
    <property type="project" value="UniProtKB-UniRule"/>
</dbReference>
<dbReference type="CDD" id="cd00496">
    <property type="entry name" value="PheRS_alpha_core"/>
    <property type="match status" value="1"/>
</dbReference>
<dbReference type="FunFam" id="3.30.930.10:FF:000003">
    <property type="entry name" value="Phenylalanine--tRNA ligase alpha subunit"/>
    <property type="match status" value="1"/>
</dbReference>
<dbReference type="Gene3D" id="3.30.930.10">
    <property type="entry name" value="Bira Bifunctional Protein, Domain 2"/>
    <property type="match status" value="1"/>
</dbReference>
<dbReference type="HAMAP" id="MF_00281">
    <property type="entry name" value="Phe_tRNA_synth_alpha1"/>
    <property type="match status" value="1"/>
</dbReference>
<dbReference type="InterPro" id="IPR006195">
    <property type="entry name" value="aa-tRNA-synth_II"/>
</dbReference>
<dbReference type="InterPro" id="IPR045864">
    <property type="entry name" value="aa-tRNA-synth_II/BPL/LPL"/>
</dbReference>
<dbReference type="InterPro" id="IPR004529">
    <property type="entry name" value="Phe-tRNA-synth_IIc_asu"/>
</dbReference>
<dbReference type="InterPro" id="IPR004188">
    <property type="entry name" value="Phe-tRNA_ligase_II_N"/>
</dbReference>
<dbReference type="InterPro" id="IPR022911">
    <property type="entry name" value="Phe_tRNA_ligase_alpha1_bac"/>
</dbReference>
<dbReference type="InterPro" id="IPR002319">
    <property type="entry name" value="Phenylalanyl-tRNA_Synthase"/>
</dbReference>
<dbReference type="InterPro" id="IPR010978">
    <property type="entry name" value="tRNA-bd_arm"/>
</dbReference>
<dbReference type="NCBIfam" id="TIGR00468">
    <property type="entry name" value="pheS"/>
    <property type="match status" value="1"/>
</dbReference>
<dbReference type="PANTHER" id="PTHR11538:SF41">
    <property type="entry name" value="PHENYLALANINE--TRNA LIGASE, MITOCHONDRIAL"/>
    <property type="match status" value="1"/>
</dbReference>
<dbReference type="PANTHER" id="PTHR11538">
    <property type="entry name" value="PHENYLALANYL-TRNA SYNTHETASE"/>
    <property type="match status" value="1"/>
</dbReference>
<dbReference type="Pfam" id="PF02912">
    <property type="entry name" value="Phe_tRNA-synt_N"/>
    <property type="match status" value="1"/>
</dbReference>
<dbReference type="Pfam" id="PF01409">
    <property type="entry name" value="tRNA-synt_2d"/>
    <property type="match status" value="1"/>
</dbReference>
<dbReference type="SUPFAM" id="SSF55681">
    <property type="entry name" value="Class II aaRS and biotin synthetases"/>
    <property type="match status" value="1"/>
</dbReference>
<dbReference type="SUPFAM" id="SSF46589">
    <property type="entry name" value="tRNA-binding arm"/>
    <property type="match status" value="1"/>
</dbReference>
<dbReference type="PROSITE" id="PS50862">
    <property type="entry name" value="AA_TRNA_LIGASE_II"/>
    <property type="match status" value="1"/>
</dbReference>